<keyword id="KW-0028">Amino-acid biosynthesis</keyword>
<keyword id="KW-0057">Aromatic amino acid biosynthesis</keyword>
<keyword id="KW-0963">Cytoplasm</keyword>
<keyword id="KW-1185">Reference proteome</keyword>
<keyword id="KW-0808">Transferase</keyword>
<feature type="chain" id="PRO_1000012414" description="3-phosphoshikimate 1-carboxyvinyltransferase">
    <location>
        <begin position="1"/>
        <end position="445"/>
    </location>
</feature>
<feature type="region of interest" description="Disordered" evidence="2">
    <location>
        <begin position="1"/>
        <end position="20"/>
    </location>
</feature>
<feature type="active site" description="Proton acceptor" evidence="1">
    <location>
        <position position="328"/>
    </location>
</feature>
<feature type="binding site" evidence="1">
    <location>
        <position position="28"/>
    </location>
    <ligand>
        <name>3-phosphoshikimate</name>
        <dbReference type="ChEBI" id="CHEBI:145989"/>
    </ligand>
</feature>
<feature type="binding site" evidence="1">
    <location>
        <position position="28"/>
    </location>
    <ligand>
        <name>phosphoenolpyruvate</name>
        <dbReference type="ChEBI" id="CHEBI:58702"/>
    </ligand>
</feature>
<feature type="binding site" evidence="1">
    <location>
        <position position="29"/>
    </location>
    <ligand>
        <name>3-phosphoshikimate</name>
        <dbReference type="ChEBI" id="CHEBI:145989"/>
    </ligand>
</feature>
<feature type="binding site" evidence="1">
    <location>
        <position position="33"/>
    </location>
    <ligand>
        <name>3-phosphoshikimate</name>
        <dbReference type="ChEBI" id="CHEBI:145989"/>
    </ligand>
</feature>
<feature type="binding site" evidence="1">
    <location>
        <position position="101"/>
    </location>
    <ligand>
        <name>phosphoenolpyruvate</name>
        <dbReference type="ChEBI" id="CHEBI:58702"/>
    </ligand>
</feature>
<feature type="binding site" evidence="1">
    <location>
        <position position="129"/>
    </location>
    <ligand>
        <name>phosphoenolpyruvate</name>
        <dbReference type="ChEBI" id="CHEBI:58702"/>
    </ligand>
</feature>
<feature type="binding site" evidence="1">
    <location>
        <position position="175"/>
    </location>
    <ligand>
        <name>3-phosphoshikimate</name>
        <dbReference type="ChEBI" id="CHEBI:145989"/>
    </ligand>
</feature>
<feature type="binding site" evidence="1">
    <location>
        <position position="177"/>
    </location>
    <ligand>
        <name>3-phosphoshikimate</name>
        <dbReference type="ChEBI" id="CHEBI:145989"/>
    </ligand>
</feature>
<feature type="binding site" evidence="1">
    <location>
        <position position="177"/>
    </location>
    <ligand>
        <name>phosphoenolpyruvate</name>
        <dbReference type="ChEBI" id="CHEBI:58702"/>
    </ligand>
</feature>
<feature type="binding site" evidence="1">
    <location>
        <position position="328"/>
    </location>
    <ligand>
        <name>3-phosphoshikimate</name>
        <dbReference type="ChEBI" id="CHEBI:145989"/>
    </ligand>
</feature>
<feature type="binding site" evidence="1">
    <location>
        <position position="355"/>
    </location>
    <ligand>
        <name>3-phosphoshikimate</name>
        <dbReference type="ChEBI" id="CHEBI:145989"/>
    </ligand>
</feature>
<feature type="binding site" evidence="1">
    <location>
        <position position="359"/>
    </location>
    <ligand>
        <name>phosphoenolpyruvate</name>
        <dbReference type="ChEBI" id="CHEBI:58702"/>
    </ligand>
</feature>
<feature type="binding site" evidence="1">
    <location>
        <position position="402"/>
    </location>
    <ligand>
        <name>phosphoenolpyruvate</name>
        <dbReference type="ChEBI" id="CHEBI:58702"/>
    </ligand>
</feature>
<sequence length="445" mass="46189">MSTSAAPTPLESRASGPLSGTIRVPGDKSISHRALILGALSVGGTRISGLLEGEDVLNTAKSMRTLGAKVERTGEFAWTVNGVGVGGFAQPAATLDFGNSGTGCRLVMGAVAGCPISAVFDGDASLRSRPMRRILDPLALMGAKVTASAEGGKLPLTLQGASNPVPIEYRTPVASAQIKSAVLLAGLAAPGVTTVIEQEASRDHTELMLKHFGAEIVTTPEGSHGRRIALTGQPELRGAPVIVPADPSSAAFPLVAALIVDGSDLVLSDVMTNPLRTGLFTTLREMGASIEEDDVRGDAGEPMARLRVRASKLKGVEVPPERAPSMIDEYLVLAVAAAYAEGTTIMRGLHELRVKESDRLEATAAMLRVNGVKVEITGDDLIVEGRGHVPGGGLVATHMDHRIAMSALVMGLASDKPVTVDDTAFIATSFPDFIPLMRKAGADFA</sequence>
<proteinExistence type="inferred from homology"/>
<comment type="function">
    <text evidence="1">Catalyzes the transfer of the enolpyruvyl moiety of phosphoenolpyruvate (PEP) to the 5-hydroxyl of shikimate-3-phosphate (S3P) to produce enolpyruvyl shikimate-3-phosphate and inorganic phosphate.</text>
</comment>
<comment type="catalytic activity">
    <reaction evidence="1">
        <text>3-phosphoshikimate + phosphoenolpyruvate = 5-O-(1-carboxyvinyl)-3-phosphoshikimate + phosphate</text>
        <dbReference type="Rhea" id="RHEA:21256"/>
        <dbReference type="ChEBI" id="CHEBI:43474"/>
        <dbReference type="ChEBI" id="CHEBI:57701"/>
        <dbReference type="ChEBI" id="CHEBI:58702"/>
        <dbReference type="ChEBI" id="CHEBI:145989"/>
        <dbReference type="EC" id="2.5.1.19"/>
    </reaction>
    <physiologicalReaction direction="left-to-right" evidence="1">
        <dbReference type="Rhea" id="RHEA:21257"/>
    </physiologicalReaction>
</comment>
<comment type="pathway">
    <text evidence="1">Metabolic intermediate biosynthesis; chorismate biosynthesis; chorismate from D-erythrose 4-phosphate and phosphoenolpyruvate: step 6/7.</text>
</comment>
<comment type="subunit">
    <text evidence="1">Monomer.</text>
</comment>
<comment type="subcellular location">
    <subcellularLocation>
        <location evidence="1">Cytoplasm</location>
    </subcellularLocation>
</comment>
<comment type="similarity">
    <text evidence="1">Belongs to the EPSP synthase family.</text>
</comment>
<accession>A4YJJ3</accession>
<protein>
    <recommendedName>
        <fullName evidence="1">3-phosphoshikimate 1-carboxyvinyltransferase</fullName>
        <ecNumber evidence="1">2.5.1.19</ecNumber>
    </recommendedName>
    <alternativeName>
        <fullName evidence="1">5-enolpyruvylshikimate-3-phosphate synthase</fullName>
        <shortName evidence="1">EPSP synthase</shortName>
        <shortName evidence="1">EPSPS</shortName>
    </alternativeName>
</protein>
<evidence type="ECO:0000255" key="1">
    <source>
        <dbReference type="HAMAP-Rule" id="MF_00210"/>
    </source>
</evidence>
<evidence type="ECO:0000256" key="2">
    <source>
        <dbReference type="SAM" id="MobiDB-lite"/>
    </source>
</evidence>
<dbReference type="EC" id="2.5.1.19" evidence="1"/>
<dbReference type="EMBL" id="CU234118">
    <property type="protein sequence ID" value="CAL74069.1"/>
    <property type="molecule type" value="Genomic_DNA"/>
</dbReference>
<dbReference type="RefSeq" id="WP_011923369.1">
    <property type="nucleotide sequence ID" value="NC_009445.1"/>
</dbReference>
<dbReference type="SMR" id="A4YJJ3"/>
<dbReference type="STRING" id="114615.BRADO0098"/>
<dbReference type="KEGG" id="bra:BRADO0098"/>
<dbReference type="eggNOG" id="COG0128">
    <property type="taxonomic scope" value="Bacteria"/>
</dbReference>
<dbReference type="HOGENOM" id="CLU_024321_0_1_5"/>
<dbReference type="OrthoDB" id="9809920at2"/>
<dbReference type="UniPathway" id="UPA00053">
    <property type="reaction ID" value="UER00089"/>
</dbReference>
<dbReference type="Proteomes" id="UP000001994">
    <property type="component" value="Chromosome"/>
</dbReference>
<dbReference type="GO" id="GO:0005737">
    <property type="term" value="C:cytoplasm"/>
    <property type="evidence" value="ECO:0007669"/>
    <property type="project" value="UniProtKB-SubCell"/>
</dbReference>
<dbReference type="GO" id="GO:0003866">
    <property type="term" value="F:3-phosphoshikimate 1-carboxyvinyltransferase activity"/>
    <property type="evidence" value="ECO:0007669"/>
    <property type="project" value="UniProtKB-UniRule"/>
</dbReference>
<dbReference type="GO" id="GO:0008652">
    <property type="term" value="P:amino acid biosynthetic process"/>
    <property type="evidence" value="ECO:0007669"/>
    <property type="project" value="UniProtKB-KW"/>
</dbReference>
<dbReference type="GO" id="GO:0009073">
    <property type="term" value="P:aromatic amino acid family biosynthetic process"/>
    <property type="evidence" value="ECO:0007669"/>
    <property type="project" value="UniProtKB-KW"/>
</dbReference>
<dbReference type="GO" id="GO:0009423">
    <property type="term" value="P:chorismate biosynthetic process"/>
    <property type="evidence" value="ECO:0007669"/>
    <property type="project" value="UniProtKB-UniRule"/>
</dbReference>
<dbReference type="CDD" id="cd01556">
    <property type="entry name" value="EPSP_synthase"/>
    <property type="match status" value="1"/>
</dbReference>
<dbReference type="FunFam" id="3.65.10.10:FF:000005">
    <property type="entry name" value="3-phosphoshikimate 1-carboxyvinyltransferase"/>
    <property type="match status" value="1"/>
</dbReference>
<dbReference type="FunFam" id="3.65.10.10:FF:000006">
    <property type="entry name" value="3-phosphoshikimate 1-carboxyvinyltransferase"/>
    <property type="match status" value="1"/>
</dbReference>
<dbReference type="Gene3D" id="3.65.10.10">
    <property type="entry name" value="Enolpyruvate transferase domain"/>
    <property type="match status" value="2"/>
</dbReference>
<dbReference type="HAMAP" id="MF_00210">
    <property type="entry name" value="EPSP_synth"/>
    <property type="match status" value="1"/>
</dbReference>
<dbReference type="InterPro" id="IPR001986">
    <property type="entry name" value="Enolpyruvate_Tfrase_dom"/>
</dbReference>
<dbReference type="InterPro" id="IPR036968">
    <property type="entry name" value="Enolpyruvate_Tfrase_sf"/>
</dbReference>
<dbReference type="InterPro" id="IPR006264">
    <property type="entry name" value="EPSP_synthase"/>
</dbReference>
<dbReference type="InterPro" id="IPR023193">
    <property type="entry name" value="EPSP_synthase_CS"/>
</dbReference>
<dbReference type="InterPro" id="IPR013792">
    <property type="entry name" value="RNA3'P_cycl/enolpyr_Trfase_a/b"/>
</dbReference>
<dbReference type="NCBIfam" id="TIGR01356">
    <property type="entry name" value="aroA"/>
    <property type="match status" value="1"/>
</dbReference>
<dbReference type="PANTHER" id="PTHR21090">
    <property type="entry name" value="AROM/DEHYDROQUINATE SYNTHASE"/>
    <property type="match status" value="1"/>
</dbReference>
<dbReference type="PANTHER" id="PTHR21090:SF5">
    <property type="entry name" value="PENTAFUNCTIONAL AROM POLYPEPTIDE"/>
    <property type="match status" value="1"/>
</dbReference>
<dbReference type="Pfam" id="PF00275">
    <property type="entry name" value="EPSP_synthase"/>
    <property type="match status" value="1"/>
</dbReference>
<dbReference type="PIRSF" id="PIRSF000505">
    <property type="entry name" value="EPSPS"/>
    <property type="match status" value="1"/>
</dbReference>
<dbReference type="SUPFAM" id="SSF55205">
    <property type="entry name" value="EPT/RTPC-like"/>
    <property type="match status" value="1"/>
</dbReference>
<dbReference type="PROSITE" id="PS00104">
    <property type="entry name" value="EPSP_SYNTHASE_1"/>
    <property type="match status" value="1"/>
</dbReference>
<dbReference type="PROSITE" id="PS00885">
    <property type="entry name" value="EPSP_SYNTHASE_2"/>
    <property type="match status" value="1"/>
</dbReference>
<reference key="1">
    <citation type="journal article" date="2007" name="Science">
        <title>Legumes symbioses: absence of nod genes in photosynthetic bradyrhizobia.</title>
        <authorList>
            <person name="Giraud E."/>
            <person name="Moulin L."/>
            <person name="Vallenet D."/>
            <person name="Barbe V."/>
            <person name="Cytryn E."/>
            <person name="Avarre J.-C."/>
            <person name="Jaubert M."/>
            <person name="Simon D."/>
            <person name="Cartieaux F."/>
            <person name="Prin Y."/>
            <person name="Bena G."/>
            <person name="Hannibal L."/>
            <person name="Fardoux J."/>
            <person name="Kojadinovic M."/>
            <person name="Vuillet L."/>
            <person name="Lajus A."/>
            <person name="Cruveiller S."/>
            <person name="Rouy Z."/>
            <person name="Mangenot S."/>
            <person name="Segurens B."/>
            <person name="Dossat C."/>
            <person name="Franck W.L."/>
            <person name="Chang W.-S."/>
            <person name="Saunders E."/>
            <person name="Bruce D."/>
            <person name="Richardson P."/>
            <person name="Normand P."/>
            <person name="Dreyfus B."/>
            <person name="Pignol D."/>
            <person name="Stacey G."/>
            <person name="Emerich D."/>
            <person name="Vermeglio A."/>
            <person name="Medigue C."/>
            <person name="Sadowsky M."/>
        </authorList>
    </citation>
    <scope>NUCLEOTIDE SEQUENCE [LARGE SCALE GENOMIC DNA]</scope>
    <source>
        <strain>ORS 278</strain>
    </source>
</reference>
<name>AROA_BRASO</name>
<organism>
    <name type="scientific">Bradyrhizobium sp. (strain ORS 278)</name>
    <dbReference type="NCBI Taxonomy" id="114615"/>
    <lineage>
        <taxon>Bacteria</taxon>
        <taxon>Pseudomonadati</taxon>
        <taxon>Pseudomonadota</taxon>
        <taxon>Alphaproteobacteria</taxon>
        <taxon>Hyphomicrobiales</taxon>
        <taxon>Nitrobacteraceae</taxon>
        <taxon>Bradyrhizobium</taxon>
    </lineage>
</organism>
<gene>
    <name evidence="1" type="primary">aroA</name>
    <name type="ordered locus">BRADO0098</name>
</gene>